<dbReference type="EC" id="3.6.1.27" evidence="1"/>
<dbReference type="EMBL" id="CP000668">
    <property type="protein sequence ID" value="ABP38846.1"/>
    <property type="molecule type" value="Genomic_DNA"/>
</dbReference>
<dbReference type="SMR" id="A4THT4"/>
<dbReference type="KEGG" id="ypp:YPDSF_0433"/>
<dbReference type="PATRIC" id="fig|386656.14.peg.1740"/>
<dbReference type="GO" id="GO:0005886">
    <property type="term" value="C:plasma membrane"/>
    <property type="evidence" value="ECO:0007669"/>
    <property type="project" value="UniProtKB-SubCell"/>
</dbReference>
<dbReference type="GO" id="GO:0050380">
    <property type="term" value="F:undecaprenyl-diphosphatase activity"/>
    <property type="evidence" value="ECO:0007669"/>
    <property type="project" value="UniProtKB-UniRule"/>
</dbReference>
<dbReference type="GO" id="GO:0071555">
    <property type="term" value="P:cell wall organization"/>
    <property type="evidence" value="ECO:0007669"/>
    <property type="project" value="UniProtKB-KW"/>
</dbReference>
<dbReference type="GO" id="GO:0009252">
    <property type="term" value="P:peptidoglycan biosynthetic process"/>
    <property type="evidence" value="ECO:0007669"/>
    <property type="project" value="UniProtKB-KW"/>
</dbReference>
<dbReference type="GO" id="GO:0008360">
    <property type="term" value="P:regulation of cell shape"/>
    <property type="evidence" value="ECO:0007669"/>
    <property type="project" value="UniProtKB-KW"/>
</dbReference>
<dbReference type="GO" id="GO:0046677">
    <property type="term" value="P:response to antibiotic"/>
    <property type="evidence" value="ECO:0007669"/>
    <property type="project" value="UniProtKB-UniRule"/>
</dbReference>
<dbReference type="HAMAP" id="MF_01006">
    <property type="entry name" value="Undec_diphosphatase"/>
    <property type="match status" value="1"/>
</dbReference>
<dbReference type="InterPro" id="IPR003824">
    <property type="entry name" value="UppP"/>
</dbReference>
<dbReference type="NCBIfam" id="NF001388">
    <property type="entry name" value="PRK00281.1-1"/>
    <property type="match status" value="1"/>
</dbReference>
<dbReference type="NCBIfam" id="NF001389">
    <property type="entry name" value="PRK00281.1-2"/>
    <property type="match status" value="1"/>
</dbReference>
<dbReference type="NCBIfam" id="NF001390">
    <property type="entry name" value="PRK00281.1-4"/>
    <property type="match status" value="1"/>
</dbReference>
<dbReference type="NCBIfam" id="TIGR00753">
    <property type="entry name" value="undec_PP_bacA"/>
    <property type="match status" value="1"/>
</dbReference>
<dbReference type="PANTHER" id="PTHR30622">
    <property type="entry name" value="UNDECAPRENYL-DIPHOSPHATASE"/>
    <property type="match status" value="1"/>
</dbReference>
<dbReference type="PANTHER" id="PTHR30622:SF3">
    <property type="entry name" value="UNDECAPRENYL-DIPHOSPHATASE"/>
    <property type="match status" value="1"/>
</dbReference>
<dbReference type="Pfam" id="PF02673">
    <property type="entry name" value="BacA"/>
    <property type="match status" value="1"/>
</dbReference>
<comment type="function">
    <text evidence="1">Catalyzes the dephosphorylation of undecaprenyl diphosphate (UPP). Confers resistance to bacitracin.</text>
</comment>
<comment type="catalytic activity">
    <reaction evidence="1">
        <text>di-trans,octa-cis-undecaprenyl diphosphate + H2O = di-trans,octa-cis-undecaprenyl phosphate + phosphate + H(+)</text>
        <dbReference type="Rhea" id="RHEA:28094"/>
        <dbReference type="ChEBI" id="CHEBI:15377"/>
        <dbReference type="ChEBI" id="CHEBI:15378"/>
        <dbReference type="ChEBI" id="CHEBI:43474"/>
        <dbReference type="ChEBI" id="CHEBI:58405"/>
        <dbReference type="ChEBI" id="CHEBI:60392"/>
        <dbReference type="EC" id="3.6.1.27"/>
    </reaction>
</comment>
<comment type="subcellular location">
    <subcellularLocation>
        <location evidence="1">Cell inner membrane</location>
        <topology evidence="1">Multi-pass membrane protein</topology>
    </subcellularLocation>
</comment>
<comment type="miscellaneous">
    <text>Bacitracin is thought to be involved in the inhibition of peptidoglycan synthesis by sequestering undecaprenyl diphosphate, thereby reducing the pool of lipid carrier available.</text>
</comment>
<comment type="similarity">
    <text evidence="1">Belongs to the UppP family.</text>
</comment>
<keyword id="KW-0046">Antibiotic resistance</keyword>
<keyword id="KW-0997">Cell inner membrane</keyword>
<keyword id="KW-1003">Cell membrane</keyword>
<keyword id="KW-0133">Cell shape</keyword>
<keyword id="KW-0961">Cell wall biogenesis/degradation</keyword>
<keyword id="KW-0378">Hydrolase</keyword>
<keyword id="KW-0472">Membrane</keyword>
<keyword id="KW-0573">Peptidoglycan synthesis</keyword>
<keyword id="KW-0812">Transmembrane</keyword>
<keyword id="KW-1133">Transmembrane helix</keyword>
<reference key="1">
    <citation type="submission" date="2007-02" db="EMBL/GenBank/DDBJ databases">
        <title>Complete sequence of chromosome of Yersinia pestis Pestoides F.</title>
        <authorList>
            <consortium name="US DOE Joint Genome Institute"/>
            <person name="Copeland A."/>
            <person name="Lucas S."/>
            <person name="Lapidus A."/>
            <person name="Barry K."/>
            <person name="Detter J.C."/>
            <person name="Glavina del Rio T."/>
            <person name="Hammon N."/>
            <person name="Israni S."/>
            <person name="Dalin E."/>
            <person name="Tice H."/>
            <person name="Pitluck S."/>
            <person name="Di Bartolo G."/>
            <person name="Chain P."/>
            <person name="Malfatti S."/>
            <person name="Shin M."/>
            <person name="Vergez L."/>
            <person name="Schmutz J."/>
            <person name="Larimer F."/>
            <person name="Land M."/>
            <person name="Hauser L."/>
            <person name="Worsham P."/>
            <person name="Chu M."/>
            <person name="Bearden S."/>
            <person name="Garcia E."/>
            <person name="Richardson P."/>
        </authorList>
    </citation>
    <scope>NUCLEOTIDE SEQUENCE [LARGE SCALE GENOMIC DNA]</scope>
    <source>
        <strain>Pestoides F</strain>
    </source>
</reference>
<proteinExistence type="inferred from homology"/>
<accession>A4THT4</accession>
<sequence>MTDMYSLFVAFILGVVEGLTEFLPVSSTGHMIIVGELLGFTGDKAKTFEVIIQLGSILAVVVVFWRRLFGLIGIHFGAVPHEGKTNGHLTLGHILLAMIPAVILGLAFHDVIKALFDPKSVMYALVAGGVLLLAAEWLKPKNPKAVGLDDITYRQAFAIGCFQCLALWPGFSRSGATISGGMLVGVNRYAASEFSFILAVPMMIGASGLDLYKSLHFLTLGDLPMFAVGFITAFIVALIAIKTFLSLIKRISFVPFAIYRFIVAAVVYWVFM</sequence>
<gene>
    <name evidence="1" type="primary">uppP</name>
    <name type="ordered locus">YPDSF_0433</name>
</gene>
<evidence type="ECO:0000255" key="1">
    <source>
        <dbReference type="HAMAP-Rule" id="MF_01006"/>
    </source>
</evidence>
<organism>
    <name type="scientific">Yersinia pestis (strain Pestoides F)</name>
    <dbReference type="NCBI Taxonomy" id="386656"/>
    <lineage>
        <taxon>Bacteria</taxon>
        <taxon>Pseudomonadati</taxon>
        <taxon>Pseudomonadota</taxon>
        <taxon>Gammaproteobacteria</taxon>
        <taxon>Enterobacterales</taxon>
        <taxon>Yersiniaceae</taxon>
        <taxon>Yersinia</taxon>
    </lineage>
</organism>
<feature type="chain" id="PRO_0000303040" description="Undecaprenyl-diphosphatase">
    <location>
        <begin position="1"/>
        <end position="272"/>
    </location>
</feature>
<feature type="transmembrane region" description="Helical" evidence="1">
    <location>
        <begin position="5"/>
        <end position="25"/>
    </location>
</feature>
<feature type="transmembrane region" description="Helical" evidence="1">
    <location>
        <begin position="45"/>
        <end position="65"/>
    </location>
</feature>
<feature type="transmembrane region" description="Helical" evidence="1">
    <location>
        <begin position="88"/>
        <end position="108"/>
    </location>
</feature>
<feature type="transmembrane region" description="Helical" evidence="1">
    <location>
        <begin position="114"/>
        <end position="134"/>
    </location>
</feature>
<feature type="transmembrane region" description="Helical" evidence="1">
    <location>
        <begin position="153"/>
        <end position="172"/>
    </location>
</feature>
<feature type="transmembrane region" description="Helical" evidence="1">
    <location>
        <begin position="189"/>
        <end position="209"/>
    </location>
</feature>
<feature type="transmembrane region" description="Helical" evidence="1">
    <location>
        <begin position="221"/>
        <end position="241"/>
    </location>
</feature>
<feature type="transmembrane region" description="Helical" evidence="1">
    <location>
        <begin position="251"/>
        <end position="271"/>
    </location>
</feature>
<protein>
    <recommendedName>
        <fullName evidence="1">Undecaprenyl-diphosphatase</fullName>
        <ecNumber evidence="1">3.6.1.27</ecNumber>
    </recommendedName>
    <alternativeName>
        <fullName evidence="1">Bacitracin resistance protein</fullName>
    </alternativeName>
    <alternativeName>
        <fullName evidence="1">Undecaprenyl pyrophosphate phosphatase</fullName>
    </alternativeName>
</protein>
<name>UPPP_YERPP</name>